<accession>A0A2I1BT56</accession>
<dbReference type="EC" id="1.-.-.-" evidence="1"/>
<dbReference type="EMBL" id="MSZS01000014">
    <property type="protein sequence ID" value="PKX88481.1"/>
    <property type="molecule type" value="Genomic_DNA"/>
</dbReference>
<dbReference type="SMR" id="A0A2I1BT56"/>
<dbReference type="STRING" id="1392255.A0A2I1BT56"/>
<dbReference type="VEuPathDB" id="FungiDB:P174DRAFT_465148"/>
<dbReference type="OMA" id="DTEKWND"/>
<dbReference type="OrthoDB" id="2735536at2759"/>
<dbReference type="UniPathway" id="UPA00213"/>
<dbReference type="Proteomes" id="UP000234474">
    <property type="component" value="Unassembled WGS sequence"/>
</dbReference>
<dbReference type="GO" id="GO:0045703">
    <property type="term" value="F:ketoreductase activity"/>
    <property type="evidence" value="ECO:0000314"/>
    <property type="project" value="UniProt"/>
</dbReference>
<dbReference type="GO" id="GO:0016616">
    <property type="term" value="F:oxidoreductase activity, acting on the CH-OH group of donors, NAD or NADP as acceptor"/>
    <property type="evidence" value="ECO:0007669"/>
    <property type="project" value="TreeGrafter"/>
</dbReference>
<dbReference type="GO" id="GO:0140782">
    <property type="term" value="P:novofumigatonin biosynthetic process"/>
    <property type="evidence" value="ECO:0000314"/>
    <property type="project" value="GO_Central"/>
</dbReference>
<dbReference type="Gene3D" id="3.40.50.720">
    <property type="entry name" value="NAD(P)-binding Rossmann-like Domain"/>
    <property type="match status" value="1"/>
</dbReference>
<dbReference type="InterPro" id="IPR001509">
    <property type="entry name" value="Epimerase_deHydtase"/>
</dbReference>
<dbReference type="InterPro" id="IPR036291">
    <property type="entry name" value="NAD(P)-bd_dom_sf"/>
</dbReference>
<dbReference type="InterPro" id="IPR050425">
    <property type="entry name" value="NAD(P)_dehydrat-like"/>
</dbReference>
<dbReference type="PANTHER" id="PTHR10366:SF562">
    <property type="entry name" value="ALDEHYDE REDUCTASE II (AFU_ORTHOLOGUE AFUA_1G11360)"/>
    <property type="match status" value="1"/>
</dbReference>
<dbReference type="PANTHER" id="PTHR10366">
    <property type="entry name" value="NAD DEPENDENT EPIMERASE/DEHYDRATASE"/>
    <property type="match status" value="1"/>
</dbReference>
<dbReference type="Pfam" id="PF01370">
    <property type="entry name" value="Epimerase"/>
    <property type="match status" value="1"/>
</dbReference>
<dbReference type="SUPFAM" id="SSF51735">
    <property type="entry name" value="NAD(P)-binding Rossmann-fold domains"/>
    <property type="match status" value="1"/>
</dbReference>
<gene>
    <name evidence="2" type="primary">nvfG</name>
    <name type="ORF">P174DRAFT_465148</name>
</gene>
<proteinExistence type="evidence at protein level"/>
<feature type="chain" id="PRO_0000453082" description="Ketoreductase nvfG">
    <location>
        <begin position="1"/>
        <end position="342"/>
    </location>
</feature>
<comment type="function">
    <text evidence="1">Ketoreductase; part of the gene cluster that mediates the biosynthesis of novofumigatonin, a heavily oxygenated meroterpenoid containing a unique orthoester moiety (PubMed:29968715). The first step of the pathway is the synthesis of 3,5-dimethylorsellinic acid (DMOA) by the polyketide synthase nvfA via condensation of one acetyl-CoA starter unit with 3 malonyl-CoA units and 2 methylations (PubMed:29968715). DMOA is then converted to farnesyl-DMOA by the farnesyltransferase nvfB (PubMed:29968715). Epoxydation by FAD-dependent monooxygenase nvfK, followed by a protonation-initiated cyclization catalyzed by the terpene cyclase nvfL leads to the production of asnavolin H (PubMed:29968715). The short chain dehydrogenase nvfC then as a 3-OH dehydrogenase of asnovolin H to yield chemesin D (PubMed:29968715). There are two branches to synthesize asnovolin A from chemesin D (PubMed:29968715). In one branch, chemesin D undergoes Baeyer-Villiger oxidation by nvfH, methylation by nvfJ, and enoyl reduction by the nvfM D enoylreductase that reduces the double bond between C-5'and C-6', to form respectively asnovolin I, asnovolin K, and asnovolin A (PubMed:29968715). In the other branch, the methylation precedes the Baeyer-Villiger oxidation and the enoyl reduction to yield asnovolin A via the asnovolin J intermediate (PubMed:29968715). Asnovolin A is further converted to fumigatonoid A by the Fe(II)/2-oxoglutarate-dependent dioxygenase nvfI that catalyzes an endoperoxidation reaction (PubMed:29968715). The alpha/beta hydrolase nvfD then acts as an epimerase that converts fumigatonoid A to its C-5' epimer, which then undergoes spontaneous or nvfD-catalyzed lactonization (PubMed:29968715). The following step utilizes the ketoreductase nvfG to produce fumigatonoid B (PubMed:29968715). The dioxygenase nvfE further converts fumigatonoid B into fumigatonoid C (PubMed:29968715). Finally the Fe(II)/2-oxoglutarate-dependent dioxygenase nvfF catalyzes two rounds of oxidation to transform fumigatonoid C into the end product, novofumigatonin A (PubMed:29968715).</text>
</comment>
<comment type="pathway">
    <text evidence="1">Secondary metabolite biosynthesis; terpenoid biosynthesis.</text>
</comment>
<comment type="disruption phenotype">
    <text evidence="1">Completely abolishes the production of novofumigatonin, but accumulates asnovolin A.</text>
</comment>
<comment type="similarity">
    <text evidence="3">Belongs to the NAD(P)-dependent epimerase/dehydratase family. Dihydroflavonol-4-reductase subfamily.</text>
</comment>
<keyword id="KW-0560">Oxidoreductase</keyword>
<keyword id="KW-1185">Reference proteome</keyword>
<evidence type="ECO:0000269" key="1">
    <source>
    </source>
</evidence>
<evidence type="ECO:0000303" key="2">
    <source>
    </source>
</evidence>
<evidence type="ECO:0000305" key="3"/>
<reference key="1">
    <citation type="journal article" date="2018" name="Proc. Natl. Acad. Sci. U.S.A.">
        <title>Linking secondary metabolites to gene clusters through genome sequencing of six diverse Aspergillus species.</title>
        <authorList>
            <person name="Kjaerboelling I."/>
            <person name="Vesth T.C."/>
            <person name="Frisvad J.C."/>
            <person name="Nybo J.L."/>
            <person name="Theobald S."/>
            <person name="Kuo A."/>
            <person name="Bowyer P."/>
            <person name="Matsuda Y."/>
            <person name="Mondo S."/>
            <person name="Lyhne E.K."/>
            <person name="Kogle M.E."/>
            <person name="Clum A."/>
            <person name="Lipzen A."/>
            <person name="Salamov A."/>
            <person name="Ngan C.Y."/>
            <person name="Daum C."/>
            <person name="Chiniquy J."/>
            <person name="Barry K."/>
            <person name="LaButti K."/>
            <person name="Haridas S."/>
            <person name="Simmons B.A."/>
            <person name="Magnuson J.K."/>
            <person name="Mortensen U.H."/>
            <person name="Larsen T.O."/>
            <person name="Grigoriev I.V."/>
            <person name="Baker S.E."/>
            <person name="Andersen M.R."/>
        </authorList>
    </citation>
    <scope>NUCLEOTIDE SEQUENCE [LARGE SCALE GENOMIC DNA]</scope>
    <source>
        <strain>IBT 16806</strain>
    </source>
</reference>
<reference key="2">
    <citation type="journal article" date="2018" name="Nat. Commun.">
        <title>Novofumigatonin biosynthesis involves a non-heme iron-dependent endoperoxide isomerase for orthoester formation.</title>
        <authorList>
            <person name="Matsuda Y."/>
            <person name="Bai T."/>
            <person name="Phippen C.B.W."/>
            <person name="Noedvig C.S."/>
            <person name="Kjaerboelling I."/>
            <person name="Vesth T.C."/>
            <person name="Andersen M.R."/>
            <person name="Mortensen U.H."/>
            <person name="Gotfredsen C.H."/>
            <person name="Abe I."/>
            <person name="Larsen T.O."/>
        </authorList>
    </citation>
    <scope>FUNCTION</scope>
    <scope>DISRUPTION PHENOTYPE</scope>
    <scope>CATALYTIC ACTIVITY</scope>
    <scope>PATHWAY</scope>
</reference>
<name>NVFG_ASPN1</name>
<protein>
    <recommendedName>
        <fullName evidence="2">Ketoreductase nvfG</fullName>
        <ecNumber evidence="1">1.-.-.-</ecNumber>
    </recommendedName>
    <alternativeName>
        <fullName evidence="2">Novofumigatonin biosynthesis cluster protein G</fullName>
    </alternativeName>
</protein>
<organism>
    <name type="scientific">Aspergillus novofumigatus (strain IBT 16806)</name>
    <dbReference type="NCBI Taxonomy" id="1392255"/>
    <lineage>
        <taxon>Eukaryota</taxon>
        <taxon>Fungi</taxon>
        <taxon>Dikarya</taxon>
        <taxon>Ascomycota</taxon>
        <taxon>Pezizomycotina</taxon>
        <taxon>Eurotiomycetes</taxon>
        <taxon>Eurotiomycetidae</taxon>
        <taxon>Eurotiales</taxon>
        <taxon>Aspergillaceae</taxon>
        <taxon>Aspergillus</taxon>
        <taxon>Aspergillus subgen. Fumigati</taxon>
    </lineage>
</organism>
<sequence length="342" mass="37634">MTQGKHCVPQGSTILVTGANGYLASAITKLLLELGYKVRGTVRAPKPWLNHYFEERYGSGNFETVIITDFQDTDTWDQALEGISGIAHVAHDMAWSSDPNIAVRGPVKAILNILDIASKHDSVKRIVLTSTIGAAPCIDINGNPATTPVNDDDWNDFAVEAAWSDSTPEEQRVYINHCAAKVEGDRKALQWVQDNQPGFDVNIVMPGFSVGRILHASITGQSMREIVGLLQGKPTKMFEFVPPWFINTEDVARLHVIALLKPEVSSQRIFACASPFTWKEVVSILRELDPSNTLIPDAPDENRRPCHVIPATEAERLIQDFFGRNGFTSLRDSLASAVTKSA</sequence>